<keyword id="KW-0067">ATP-binding</keyword>
<keyword id="KW-0210">Decarboxylase</keyword>
<keyword id="KW-0312">Gluconeogenesis</keyword>
<keyword id="KW-0456">Lyase</keyword>
<keyword id="KW-0547">Nucleotide-binding</keyword>
<keyword id="KW-1185">Reference proteome</keyword>
<accession>Q96UL8</accession>
<accession>C8VKU0</accession>
<accession>Q5BC12</accession>
<gene>
    <name type="primary">acuF</name>
    <name type="ORF">AN1918</name>
</gene>
<feature type="chain" id="PRO_0000203872" description="Phosphoenolpyruvate carboxykinase (ATP)">
    <location>
        <begin position="1"/>
        <end position="600"/>
    </location>
</feature>
<feature type="binding site" evidence="1">
    <location>
        <begin position="302"/>
        <end position="309"/>
    </location>
    <ligand>
        <name>ATP</name>
        <dbReference type="ChEBI" id="CHEBI:30616"/>
    </ligand>
</feature>
<feature type="sequence conflict" description="In Ref. 1; AAL10705." evidence="2" ref="1">
    <original>A</original>
    <variation>V</variation>
    <location>
        <position position="196"/>
    </location>
</feature>
<feature type="sequence conflict" description="In Ref. 1; AAL10705." evidence="2" ref="1">
    <original>M</original>
    <variation>I</variation>
    <location>
        <position position="479"/>
    </location>
</feature>
<protein>
    <recommendedName>
        <fullName>Phosphoenolpyruvate carboxykinase (ATP)</fullName>
        <ecNumber>4.1.1.49</ecNumber>
    </recommendedName>
</protein>
<proteinExistence type="inferred from homology"/>
<evidence type="ECO:0000255" key="1"/>
<evidence type="ECO:0000305" key="2"/>
<dbReference type="EC" id="4.1.1.49"/>
<dbReference type="EMBL" id="AY049067">
    <property type="protein sequence ID" value="AAL10705.1"/>
    <property type="status" value="ALT_INIT"/>
    <property type="molecule type" value="Genomic_DNA"/>
</dbReference>
<dbReference type="EMBL" id="AACD01000029">
    <property type="protein sequence ID" value="EAA65083.1"/>
    <property type="status" value="ALT_INIT"/>
    <property type="molecule type" value="Genomic_DNA"/>
</dbReference>
<dbReference type="EMBL" id="BN001307">
    <property type="protein sequence ID" value="CBF85824.1"/>
    <property type="molecule type" value="Genomic_DNA"/>
</dbReference>
<dbReference type="RefSeq" id="XP_659522.1">
    <property type="nucleotide sequence ID" value="XM_654430.1"/>
</dbReference>
<dbReference type="SMR" id="Q96UL8"/>
<dbReference type="FunCoup" id="Q96UL8">
    <property type="interactions" value="241"/>
</dbReference>
<dbReference type="STRING" id="227321.Q96UL8"/>
<dbReference type="EnsemblFungi" id="CBF85824">
    <property type="protein sequence ID" value="CBF85824"/>
    <property type="gene ID" value="ANIA_01918"/>
</dbReference>
<dbReference type="KEGG" id="ani:ANIA_01918"/>
<dbReference type="VEuPathDB" id="FungiDB:AN1918"/>
<dbReference type="eggNOG" id="ENOG502QQI5">
    <property type="taxonomic scope" value="Eukaryota"/>
</dbReference>
<dbReference type="HOGENOM" id="CLU_018247_2_0_1"/>
<dbReference type="InParanoid" id="Q96UL8"/>
<dbReference type="OMA" id="MRYAGEM"/>
<dbReference type="OrthoDB" id="184182at2759"/>
<dbReference type="UniPathway" id="UPA00138"/>
<dbReference type="Proteomes" id="UP000000560">
    <property type="component" value="Chromosome VII"/>
</dbReference>
<dbReference type="GO" id="GO:0005829">
    <property type="term" value="C:cytosol"/>
    <property type="evidence" value="ECO:0000318"/>
    <property type="project" value="GO_Central"/>
</dbReference>
<dbReference type="GO" id="GO:0005524">
    <property type="term" value="F:ATP binding"/>
    <property type="evidence" value="ECO:0007669"/>
    <property type="project" value="UniProtKB-KW"/>
</dbReference>
<dbReference type="GO" id="GO:0004612">
    <property type="term" value="F:phosphoenolpyruvate carboxykinase (ATP) activity"/>
    <property type="evidence" value="ECO:0000318"/>
    <property type="project" value="GO_Central"/>
</dbReference>
<dbReference type="GO" id="GO:0006083">
    <property type="term" value="P:acetate metabolic process"/>
    <property type="evidence" value="ECO:0000270"/>
    <property type="project" value="AspGD"/>
</dbReference>
<dbReference type="GO" id="GO:0015976">
    <property type="term" value="P:carbon utilization"/>
    <property type="evidence" value="ECO:0000315"/>
    <property type="project" value="AspGD"/>
</dbReference>
<dbReference type="GO" id="GO:0006094">
    <property type="term" value="P:gluconeogenesis"/>
    <property type="evidence" value="ECO:0000318"/>
    <property type="project" value="GO_Central"/>
</dbReference>
<dbReference type="CDD" id="cd00484">
    <property type="entry name" value="PEPCK_ATP"/>
    <property type="match status" value="1"/>
</dbReference>
<dbReference type="FunFam" id="2.170.8.10:FF:000001">
    <property type="entry name" value="Phosphoenolpyruvate carboxykinase (ATP)"/>
    <property type="match status" value="1"/>
</dbReference>
<dbReference type="FunFam" id="3.40.449.10:FF:000002">
    <property type="entry name" value="Phosphoenolpyruvate carboxykinase [ATP]"/>
    <property type="match status" value="1"/>
</dbReference>
<dbReference type="Gene3D" id="3.90.228.20">
    <property type="match status" value="1"/>
</dbReference>
<dbReference type="Gene3D" id="3.40.449.10">
    <property type="entry name" value="Phosphoenolpyruvate Carboxykinase, domain 1"/>
    <property type="match status" value="1"/>
</dbReference>
<dbReference type="Gene3D" id="2.170.8.10">
    <property type="entry name" value="Phosphoenolpyruvate Carboxykinase, domain 2"/>
    <property type="match status" value="1"/>
</dbReference>
<dbReference type="HAMAP" id="MF_00453">
    <property type="entry name" value="PEPCK_ATP"/>
    <property type="match status" value="1"/>
</dbReference>
<dbReference type="InterPro" id="IPR001272">
    <property type="entry name" value="PEP_carboxykinase_ATP"/>
</dbReference>
<dbReference type="InterPro" id="IPR013035">
    <property type="entry name" value="PEP_carboxykinase_C"/>
</dbReference>
<dbReference type="InterPro" id="IPR008210">
    <property type="entry name" value="PEP_carboxykinase_N"/>
</dbReference>
<dbReference type="InterPro" id="IPR015994">
    <property type="entry name" value="PEPCK_ATP_CS"/>
</dbReference>
<dbReference type="NCBIfam" id="TIGR00224">
    <property type="entry name" value="pckA"/>
    <property type="match status" value="1"/>
</dbReference>
<dbReference type="NCBIfam" id="NF006820">
    <property type="entry name" value="PRK09344.1-2"/>
    <property type="match status" value="1"/>
</dbReference>
<dbReference type="NCBIfam" id="NF006821">
    <property type="entry name" value="PRK09344.1-3"/>
    <property type="match status" value="1"/>
</dbReference>
<dbReference type="PANTHER" id="PTHR30031:SF0">
    <property type="entry name" value="PHOSPHOENOLPYRUVATE CARBOXYKINASE (ATP)"/>
    <property type="match status" value="1"/>
</dbReference>
<dbReference type="PANTHER" id="PTHR30031">
    <property type="entry name" value="PHOSPHOENOLPYRUVATE CARBOXYKINASE ATP"/>
    <property type="match status" value="1"/>
</dbReference>
<dbReference type="Pfam" id="PF01293">
    <property type="entry name" value="PEPCK_ATP"/>
    <property type="match status" value="1"/>
</dbReference>
<dbReference type="PIRSF" id="PIRSF006294">
    <property type="entry name" value="PEP_crbxkin"/>
    <property type="match status" value="1"/>
</dbReference>
<dbReference type="SUPFAM" id="SSF68923">
    <property type="entry name" value="PEP carboxykinase N-terminal domain"/>
    <property type="match status" value="1"/>
</dbReference>
<dbReference type="SUPFAM" id="SSF53795">
    <property type="entry name" value="PEP carboxykinase-like"/>
    <property type="match status" value="1"/>
</dbReference>
<dbReference type="PROSITE" id="PS00532">
    <property type="entry name" value="PEPCK_ATP"/>
    <property type="match status" value="1"/>
</dbReference>
<name>PCKA_EMENI</name>
<sequence>MAPGANIHIPPAGPPEPGPLYSDFYQQQIERQRNNNYHSTSLRNMVATSVNRTALHPGGVQPGKGHTELEEELHEHAHIDYDRVAIIANPSVAALYEDALVYETGTAITSSGALTAYSGAKTGRSPSDKRIVKEESSEKEVWWGPVNKPMTPDVWRINRERAVDYLNTRNRIYVIDGFAGWDERYRISVRVVCARAYHALFMRNMLIRPSAEELKHFHPDYVIYNAGSFPANRFTEGMTSATSVAINFAEKEMVILGTEYAGEMKKGVFTILFYEMPVKHNVLTLHSSANEGQNGDVTVFFGLSGTGKTTLSADPKRALIGDDEHCWTDRGVFNIEGGCYAKCIGLSAEKEPDIFNAIRFGSVLENVVFDPISRVVDYDDSTLTENTRCAYPIEYIENAKVPCLSDSHPSNIILLTCDARGVLPPISKLTTEQTMFHFISGYTSKMAGTEDGVTEPQATFSSCFAQPFLALHPMRYARMLADKISQHKANAWLLNTGWVGAGATTGGKRCPLKYTRAILDAIHSGELAKAEYETYDVFNLHVPKSCPGVPDELLNPKNSWTATTSFSDEVNKLAKLFNENFQKYADQATKEVIAAGPVVQ</sequence>
<organism>
    <name type="scientific">Emericella nidulans (strain FGSC A4 / ATCC 38163 / CBS 112.46 / NRRL 194 / M139)</name>
    <name type="common">Aspergillus nidulans</name>
    <dbReference type="NCBI Taxonomy" id="227321"/>
    <lineage>
        <taxon>Eukaryota</taxon>
        <taxon>Fungi</taxon>
        <taxon>Dikarya</taxon>
        <taxon>Ascomycota</taxon>
        <taxon>Pezizomycotina</taxon>
        <taxon>Eurotiomycetes</taxon>
        <taxon>Eurotiomycetidae</taxon>
        <taxon>Eurotiales</taxon>
        <taxon>Aspergillaceae</taxon>
        <taxon>Aspergillus</taxon>
        <taxon>Aspergillus subgen. Nidulantes</taxon>
    </lineage>
</organism>
<comment type="catalytic activity">
    <reaction>
        <text>oxaloacetate + ATP = phosphoenolpyruvate + ADP + CO2</text>
        <dbReference type="Rhea" id="RHEA:18617"/>
        <dbReference type="ChEBI" id="CHEBI:16452"/>
        <dbReference type="ChEBI" id="CHEBI:16526"/>
        <dbReference type="ChEBI" id="CHEBI:30616"/>
        <dbReference type="ChEBI" id="CHEBI:58702"/>
        <dbReference type="ChEBI" id="CHEBI:456216"/>
        <dbReference type="EC" id="4.1.1.49"/>
    </reaction>
</comment>
<comment type="pathway">
    <text>Carbohydrate biosynthesis; gluconeogenesis.</text>
</comment>
<comment type="similarity">
    <text evidence="2">Belongs to the phosphoenolpyruvate carboxykinase (ATP) family.</text>
</comment>
<comment type="sequence caution" evidence="2">
    <conflict type="erroneous initiation">
        <sequence resource="EMBL-CDS" id="AAL10705"/>
    </conflict>
    <text>Truncated N-terminus.</text>
</comment>
<comment type="sequence caution" evidence="2">
    <conflict type="erroneous initiation">
        <sequence resource="EMBL-CDS" id="EAA65083"/>
    </conflict>
    <text>Truncated N-terminus.</text>
</comment>
<reference key="1">
    <citation type="journal article" date="2002" name="J. Bacteriol.">
        <title>Regulation of the acuF gene, encoding phosphoenolpyruvate carboxykinase in the filamentous fungus Aspergillus nidulans.</title>
        <authorList>
            <person name="Hynes M.J."/>
            <person name="Draht O.W."/>
            <person name="Davis M.A."/>
        </authorList>
    </citation>
    <scope>NUCLEOTIDE SEQUENCE [GENOMIC DNA]</scope>
</reference>
<reference key="2">
    <citation type="journal article" date="2005" name="Nature">
        <title>Sequencing of Aspergillus nidulans and comparative analysis with A. fumigatus and A. oryzae.</title>
        <authorList>
            <person name="Galagan J.E."/>
            <person name="Calvo S.E."/>
            <person name="Cuomo C."/>
            <person name="Ma L.-J."/>
            <person name="Wortman J.R."/>
            <person name="Batzoglou S."/>
            <person name="Lee S.-I."/>
            <person name="Bastuerkmen M."/>
            <person name="Spevak C.C."/>
            <person name="Clutterbuck J."/>
            <person name="Kapitonov V."/>
            <person name="Jurka J."/>
            <person name="Scazzocchio C."/>
            <person name="Farman M.L."/>
            <person name="Butler J."/>
            <person name="Purcell S."/>
            <person name="Harris S."/>
            <person name="Braus G.H."/>
            <person name="Draht O."/>
            <person name="Busch S."/>
            <person name="D'Enfert C."/>
            <person name="Bouchier C."/>
            <person name="Goldman G.H."/>
            <person name="Bell-Pedersen D."/>
            <person name="Griffiths-Jones S."/>
            <person name="Doonan J.H."/>
            <person name="Yu J."/>
            <person name="Vienken K."/>
            <person name="Pain A."/>
            <person name="Freitag M."/>
            <person name="Selker E.U."/>
            <person name="Archer D.B."/>
            <person name="Penalva M.A."/>
            <person name="Oakley B.R."/>
            <person name="Momany M."/>
            <person name="Tanaka T."/>
            <person name="Kumagai T."/>
            <person name="Asai K."/>
            <person name="Machida M."/>
            <person name="Nierman W.C."/>
            <person name="Denning D.W."/>
            <person name="Caddick M.X."/>
            <person name="Hynes M."/>
            <person name="Paoletti M."/>
            <person name="Fischer R."/>
            <person name="Miller B.L."/>
            <person name="Dyer P.S."/>
            <person name="Sachs M.S."/>
            <person name="Osmani S.A."/>
            <person name="Birren B.W."/>
        </authorList>
    </citation>
    <scope>NUCLEOTIDE SEQUENCE [LARGE SCALE GENOMIC DNA]</scope>
    <source>
        <strain>FGSC A4 / ATCC 38163 / CBS 112.46 / NRRL 194 / M139</strain>
    </source>
</reference>
<reference key="3">
    <citation type="journal article" date="2009" name="Fungal Genet. Biol.">
        <title>The 2008 update of the Aspergillus nidulans genome annotation: a community effort.</title>
        <authorList>
            <person name="Wortman J.R."/>
            <person name="Gilsenan J.M."/>
            <person name="Joardar V."/>
            <person name="Deegan J."/>
            <person name="Clutterbuck J."/>
            <person name="Andersen M.R."/>
            <person name="Archer D."/>
            <person name="Bencina M."/>
            <person name="Braus G."/>
            <person name="Coutinho P."/>
            <person name="von Dohren H."/>
            <person name="Doonan J."/>
            <person name="Driessen A.J."/>
            <person name="Durek P."/>
            <person name="Espeso E."/>
            <person name="Fekete E."/>
            <person name="Flipphi M."/>
            <person name="Estrada C.G."/>
            <person name="Geysens S."/>
            <person name="Goldman G."/>
            <person name="de Groot P.W."/>
            <person name="Hansen K."/>
            <person name="Harris S.D."/>
            <person name="Heinekamp T."/>
            <person name="Helmstaedt K."/>
            <person name="Henrissat B."/>
            <person name="Hofmann G."/>
            <person name="Homan T."/>
            <person name="Horio T."/>
            <person name="Horiuchi H."/>
            <person name="James S."/>
            <person name="Jones M."/>
            <person name="Karaffa L."/>
            <person name="Karanyi Z."/>
            <person name="Kato M."/>
            <person name="Keller N."/>
            <person name="Kelly D.E."/>
            <person name="Kiel J.A."/>
            <person name="Kim J.M."/>
            <person name="van der Klei I.J."/>
            <person name="Klis F.M."/>
            <person name="Kovalchuk A."/>
            <person name="Krasevec N."/>
            <person name="Kubicek C.P."/>
            <person name="Liu B."/>
            <person name="Maccabe A."/>
            <person name="Meyer V."/>
            <person name="Mirabito P."/>
            <person name="Miskei M."/>
            <person name="Mos M."/>
            <person name="Mullins J."/>
            <person name="Nelson D.R."/>
            <person name="Nielsen J."/>
            <person name="Oakley B.R."/>
            <person name="Osmani S.A."/>
            <person name="Pakula T."/>
            <person name="Paszewski A."/>
            <person name="Paulsen I."/>
            <person name="Pilsyk S."/>
            <person name="Pocsi I."/>
            <person name="Punt P.J."/>
            <person name="Ram A.F."/>
            <person name="Ren Q."/>
            <person name="Robellet X."/>
            <person name="Robson G."/>
            <person name="Seiboth B."/>
            <person name="van Solingen P."/>
            <person name="Specht T."/>
            <person name="Sun J."/>
            <person name="Taheri-Talesh N."/>
            <person name="Takeshita N."/>
            <person name="Ussery D."/>
            <person name="vanKuyk P.A."/>
            <person name="Visser H."/>
            <person name="van de Vondervoort P.J."/>
            <person name="de Vries R.P."/>
            <person name="Walton J."/>
            <person name="Xiang X."/>
            <person name="Xiong Y."/>
            <person name="Zeng A.P."/>
            <person name="Brandt B.W."/>
            <person name="Cornell M.J."/>
            <person name="van den Hondel C.A."/>
            <person name="Visser J."/>
            <person name="Oliver S.G."/>
            <person name="Turner G."/>
        </authorList>
    </citation>
    <scope>GENOME REANNOTATION</scope>
    <source>
        <strain>FGSC A4 / ATCC 38163 / CBS 112.46 / NRRL 194 / M139</strain>
    </source>
</reference>